<dbReference type="EC" id="3.4.19.3" evidence="1"/>
<dbReference type="EMBL" id="AL590842">
    <property type="protein sequence ID" value="CAL21322.1"/>
    <property type="molecule type" value="Genomic_DNA"/>
</dbReference>
<dbReference type="EMBL" id="AE009952">
    <property type="protein sequence ID" value="AAM84854.1"/>
    <property type="molecule type" value="Genomic_DNA"/>
</dbReference>
<dbReference type="EMBL" id="AE017042">
    <property type="protein sequence ID" value="AAS62705.1"/>
    <property type="molecule type" value="Genomic_DNA"/>
</dbReference>
<dbReference type="PIR" id="AG0329">
    <property type="entry name" value="AG0329"/>
</dbReference>
<dbReference type="RefSeq" id="WP_002209662.1">
    <property type="nucleotide sequence ID" value="NZ_WUCM01000006.1"/>
</dbReference>
<dbReference type="RefSeq" id="YP_002347650.1">
    <property type="nucleotide sequence ID" value="NC_003143.1"/>
</dbReference>
<dbReference type="SMR" id="Q8ZD86"/>
<dbReference type="STRING" id="214092.YPO2703"/>
<dbReference type="MEROPS" id="C15.001"/>
<dbReference type="PaxDb" id="214092-YPO2703"/>
<dbReference type="DNASU" id="1146227"/>
<dbReference type="EnsemblBacteria" id="AAS62705">
    <property type="protein sequence ID" value="AAS62705"/>
    <property type="gene ID" value="YP_2507"/>
</dbReference>
<dbReference type="GeneID" id="57975988"/>
<dbReference type="KEGG" id="ype:YPO2703"/>
<dbReference type="KEGG" id="ypk:y1280"/>
<dbReference type="KEGG" id="ypm:YP_2507"/>
<dbReference type="PATRIC" id="fig|214092.21.peg.3141"/>
<dbReference type="eggNOG" id="COG2039">
    <property type="taxonomic scope" value="Bacteria"/>
</dbReference>
<dbReference type="HOGENOM" id="CLU_043960_4_0_6"/>
<dbReference type="OMA" id="VCNHVFY"/>
<dbReference type="OrthoDB" id="9779738at2"/>
<dbReference type="Proteomes" id="UP000000815">
    <property type="component" value="Chromosome"/>
</dbReference>
<dbReference type="Proteomes" id="UP000001019">
    <property type="component" value="Chromosome"/>
</dbReference>
<dbReference type="Proteomes" id="UP000002490">
    <property type="component" value="Chromosome"/>
</dbReference>
<dbReference type="GO" id="GO:0005829">
    <property type="term" value="C:cytosol"/>
    <property type="evidence" value="ECO:0007669"/>
    <property type="project" value="InterPro"/>
</dbReference>
<dbReference type="GO" id="GO:0016920">
    <property type="term" value="F:pyroglutamyl-peptidase activity"/>
    <property type="evidence" value="ECO:0007669"/>
    <property type="project" value="UniProtKB-UniRule"/>
</dbReference>
<dbReference type="GO" id="GO:0006508">
    <property type="term" value="P:proteolysis"/>
    <property type="evidence" value="ECO:0007669"/>
    <property type="project" value="UniProtKB-KW"/>
</dbReference>
<dbReference type="CDD" id="cd00501">
    <property type="entry name" value="Peptidase_C15"/>
    <property type="match status" value="1"/>
</dbReference>
<dbReference type="FunFam" id="3.40.630.20:FF:000001">
    <property type="entry name" value="Pyrrolidone-carboxylate peptidase"/>
    <property type="match status" value="1"/>
</dbReference>
<dbReference type="Gene3D" id="3.40.630.20">
    <property type="entry name" value="Peptidase C15, pyroglutamyl peptidase I-like"/>
    <property type="match status" value="1"/>
</dbReference>
<dbReference type="HAMAP" id="MF_00417">
    <property type="entry name" value="Pyrrolid_peptidase"/>
    <property type="match status" value="1"/>
</dbReference>
<dbReference type="InterPro" id="IPR000816">
    <property type="entry name" value="Peptidase_C15"/>
</dbReference>
<dbReference type="InterPro" id="IPR016125">
    <property type="entry name" value="Peptidase_C15-like"/>
</dbReference>
<dbReference type="InterPro" id="IPR036440">
    <property type="entry name" value="Peptidase_C15-like_sf"/>
</dbReference>
<dbReference type="InterPro" id="IPR029762">
    <property type="entry name" value="PGP-I_bact-type"/>
</dbReference>
<dbReference type="InterPro" id="IPR033694">
    <property type="entry name" value="PGPEP1_Cys_AS"/>
</dbReference>
<dbReference type="InterPro" id="IPR033693">
    <property type="entry name" value="PGPEP1_Glu_AS"/>
</dbReference>
<dbReference type="NCBIfam" id="NF009676">
    <property type="entry name" value="PRK13197.1"/>
    <property type="match status" value="1"/>
</dbReference>
<dbReference type="NCBIfam" id="TIGR00504">
    <property type="entry name" value="pyro_pdase"/>
    <property type="match status" value="1"/>
</dbReference>
<dbReference type="PANTHER" id="PTHR23402">
    <property type="entry name" value="PROTEASE FAMILY C15 PYROGLUTAMYL-PEPTIDASE I-RELATED"/>
    <property type="match status" value="1"/>
</dbReference>
<dbReference type="PANTHER" id="PTHR23402:SF1">
    <property type="entry name" value="PYROGLUTAMYL-PEPTIDASE I"/>
    <property type="match status" value="1"/>
</dbReference>
<dbReference type="Pfam" id="PF01470">
    <property type="entry name" value="Peptidase_C15"/>
    <property type="match status" value="1"/>
</dbReference>
<dbReference type="PIRSF" id="PIRSF015592">
    <property type="entry name" value="Prld-crbxl_pptds"/>
    <property type="match status" value="1"/>
</dbReference>
<dbReference type="PRINTS" id="PR00706">
    <property type="entry name" value="PYROGLUPTASE"/>
</dbReference>
<dbReference type="SUPFAM" id="SSF53182">
    <property type="entry name" value="Pyrrolidone carboxyl peptidase (pyroglutamate aminopeptidase)"/>
    <property type="match status" value="1"/>
</dbReference>
<dbReference type="PROSITE" id="PS01334">
    <property type="entry name" value="PYRASE_CYS"/>
    <property type="match status" value="1"/>
</dbReference>
<dbReference type="PROSITE" id="PS01333">
    <property type="entry name" value="PYRASE_GLU"/>
    <property type="match status" value="1"/>
</dbReference>
<evidence type="ECO:0000255" key="1">
    <source>
        <dbReference type="HAMAP-Rule" id="MF_00417"/>
    </source>
</evidence>
<name>PCP_YERPE</name>
<reference key="1">
    <citation type="journal article" date="2001" name="Nature">
        <title>Genome sequence of Yersinia pestis, the causative agent of plague.</title>
        <authorList>
            <person name="Parkhill J."/>
            <person name="Wren B.W."/>
            <person name="Thomson N.R."/>
            <person name="Titball R.W."/>
            <person name="Holden M.T.G."/>
            <person name="Prentice M.B."/>
            <person name="Sebaihia M."/>
            <person name="James K.D."/>
            <person name="Churcher C.M."/>
            <person name="Mungall K.L."/>
            <person name="Baker S."/>
            <person name="Basham D."/>
            <person name="Bentley S.D."/>
            <person name="Brooks K."/>
            <person name="Cerdeno-Tarraga A.-M."/>
            <person name="Chillingworth T."/>
            <person name="Cronin A."/>
            <person name="Davies R.M."/>
            <person name="Davis P."/>
            <person name="Dougan G."/>
            <person name="Feltwell T."/>
            <person name="Hamlin N."/>
            <person name="Holroyd S."/>
            <person name="Jagels K."/>
            <person name="Karlyshev A.V."/>
            <person name="Leather S."/>
            <person name="Moule S."/>
            <person name="Oyston P.C.F."/>
            <person name="Quail M.A."/>
            <person name="Rutherford K.M."/>
            <person name="Simmonds M."/>
            <person name="Skelton J."/>
            <person name="Stevens K."/>
            <person name="Whitehead S."/>
            <person name="Barrell B.G."/>
        </authorList>
    </citation>
    <scope>NUCLEOTIDE SEQUENCE [LARGE SCALE GENOMIC DNA]</scope>
    <source>
        <strain>CO-92 / Biovar Orientalis</strain>
    </source>
</reference>
<reference key="2">
    <citation type="journal article" date="2002" name="J. Bacteriol.">
        <title>Genome sequence of Yersinia pestis KIM.</title>
        <authorList>
            <person name="Deng W."/>
            <person name="Burland V."/>
            <person name="Plunkett G. III"/>
            <person name="Boutin A."/>
            <person name="Mayhew G.F."/>
            <person name="Liss P."/>
            <person name="Perna N.T."/>
            <person name="Rose D.J."/>
            <person name="Mau B."/>
            <person name="Zhou S."/>
            <person name="Schwartz D.C."/>
            <person name="Fetherston J.D."/>
            <person name="Lindler L.E."/>
            <person name="Brubaker R.R."/>
            <person name="Plano G.V."/>
            <person name="Straley S.C."/>
            <person name="McDonough K.A."/>
            <person name="Nilles M.L."/>
            <person name="Matson J.S."/>
            <person name="Blattner F.R."/>
            <person name="Perry R.D."/>
        </authorList>
    </citation>
    <scope>NUCLEOTIDE SEQUENCE [LARGE SCALE GENOMIC DNA]</scope>
    <source>
        <strain>KIM10+ / Biovar Mediaevalis</strain>
    </source>
</reference>
<reference key="3">
    <citation type="journal article" date="2004" name="DNA Res.">
        <title>Complete genome sequence of Yersinia pestis strain 91001, an isolate avirulent to humans.</title>
        <authorList>
            <person name="Song Y."/>
            <person name="Tong Z."/>
            <person name="Wang J."/>
            <person name="Wang L."/>
            <person name="Guo Z."/>
            <person name="Han Y."/>
            <person name="Zhang J."/>
            <person name="Pei D."/>
            <person name="Zhou D."/>
            <person name="Qin H."/>
            <person name="Pang X."/>
            <person name="Han Y."/>
            <person name="Zhai J."/>
            <person name="Li M."/>
            <person name="Cui B."/>
            <person name="Qi Z."/>
            <person name="Jin L."/>
            <person name="Dai R."/>
            <person name="Chen F."/>
            <person name="Li S."/>
            <person name="Ye C."/>
            <person name="Du Z."/>
            <person name="Lin W."/>
            <person name="Wang J."/>
            <person name="Yu J."/>
            <person name="Yang H."/>
            <person name="Wang J."/>
            <person name="Huang P."/>
            <person name="Yang R."/>
        </authorList>
    </citation>
    <scope>NUCLEOTIDE SEQUENCE [LARGE SCALE GENOMIC DNA]</scope>
    <source>
        <strain>91001 / Biovar Mediaevalis</strain>
    </source>
</reference>
<gene>
    <name evidence="1" type="primary">pcp</name>
    <name type="ordered locus">YPO2703</name>
    <name type="ordered locus">y1280</name>
    <name type="ordered locus">YP_2507</name>
</gene>
<proteinExistence type="inferred from homology"/>
<feature type="chain" id="PRO_0000184752" description="Pyrrolidone-carboxylate peptidase">
    <location>
        <begin position="1"/>
        <end position="215"/>
    </location>
</feature>
<feature type="active site" evidence="1">
    <location>
        <position position="80"/>
    </location>
</feature>
<feature type="active site" evidence="1">
    <location>
        <position position="143"/>
    </location>
</feature>
<feature type="active site" evidence="1">
    <location>
        <position position="167"/>
    </location>
</feature>
<keyword id="KW-0963">Cytoplasm</keyword>
<keyword id="KW-0378">Hydrolase</keyword>
<keyword id="KW-0645">Protease</keyword>
<keyword id="KW-1185">Reference proteome</keyword>
<keyword id="KW-0788">Thiol protease</keyword>
<comment type="function">
    <text evidence="1">Removes 5-oxoproline from various penultimate amino acid residues except L-proline.</text>
</comment>
<comment type="catalytic activity">
    <reaction evidence="1">
        <text>Release of an N-terminal pyroglutamyl group from a polypeptide, the second amino acid generally not being Pro.</text>
        <dbReference type="EC" id="3.4.19.3"/>
    </reaction>
</comment>
<comment type="subunit">
    <text evidence="1">Homotetramer.</text>
</comment>
<comment type="subcellular location">
    <subcellularLocation>
        <location evidence="1">Cytoplasm</location>
    </subcellularLocation>
</comment>
<comment type="similarity">
    <text evidence="1">Belongs to the peptidase C15 family.</text>
</comment>
<protein>
    <recommendedName>
        <fullName evidence="1">Pyrrolidone-carboxylate peptidase</fullName>
        <ecNumber evidence="1">3.4.19.3</ecNumber>
    </recommendedName>
    <alternativeName>
        <fullName evidence="1">5-oxoprolyl-peptidase</fullName>
    </alternativeName>
    <alternativeName>
        <fullName evidence="1">Pyroglutamyl-peptidase I</fullName>
        <shortName evidence="1">PGP-I</shortName>
        <shortName evidence="1">Pyrase</shortName>
    </alternativeName>
</protein>
<accession>Q8ZD86</accession>
<accession>Q0WDI8</accession>
<organism>
    <name type="scientific">Yersinia pestis</name>
    <dbReference type="NCBI Taxonomy" id="632"/>
    <lineage>
        <taxon>Bacteria</taxon>
        <taxon>Pseudomonadati</taxon>
        <taxon>Pseudomonadota</taxon>
        <taxon>Gammaproteobacteria</taxon>
        <taxon>Enterobacterales</taxon>
        <taxon>Yersiniaceae</taxon>
        <taxon>Yersinia</taxon>
    </lineage>
</organism>
<sequence length="215" mass="23142">MRRVLITGFEPFGGERINPSWEVVKQMNDLMMGGVRIVARQLPCAFGEALTALNTAIDDVQPVLVLAIGQAGGRADITIERVAINVDDARIPDNLGNQPVDQPIIQEGPAAYFTRLPIKAMVQGIREAGIPASVSQTAGTYVCNHVMYGLLHRLNQFNNEVKGGFIHIPYLPEQAVDHPGAPSMSAQSVLVALELAISIALQIEHDLHITGGAVH</sequence>